<name>AMBI1_FISAU</name>
<gene>
    <name evidence="3" type="primary">ambI1</name>
    <name evidence="4" type="synonym">famH1</name>
</gene>
<protein>
    <recommendedName>
        <fullName evidence="5">L-tryptophan isonitrile synthase AmbI1</fullName>
        <ecNumber evidence="1 2">4.1.99.25</ecNumber>
    </recommendedName>
</protein>
<organism>
    <name type="scientific">Fischerella ambigua (strain UTEX 1903)</name>
    <dbReference type="NCBI Taxonomy" id="230521"/>
    <lineage>
        <taxon>Bacteria</taxon>
        <taxon>Bacillati</taxon>
        <taxon>Cyanobacteriota</taxon>
        <taxon>Cyanophyceae</taxon>
        <taxon>Nostocales</taxon>
        <taxon>Hapalosiphonaceae</taxon>
        <taxon>Fischerella</taxon>
    </lineage>
</organism>
<proteinExistence type="evidence at protein level"/>
<reference key="1">
    <citation type="journal article" date="2014" name="ACS Chem. Biol.">
        <title>Biosynthesis of ambiguine indole alkaloids in cyanobacterium Fischerella ambigua.</title>
        <authorList>
            <person name="Hillwig M.L."/>
            <person name="Zhu Q."/>
            <person name="Liu X."/>
        </authorList>
    </citation>
    <scope>NUCLEOTIDE SEQUENCE [GENOMIC DNA]</scope>
    <scope>FUNCTION</scope>
    <scope>CATALYTIC ACTIVITY</scope>
    <source>
        <strain>UTEX 1903</strain>
    </source>
</reference>
<reference key="2">
    <citation type="journal article" date="2014" name="BMC Microbiol.">
        <title>Comparative analysis of hapalindole, ambiguine and welwitindolinone gene clusters and reconstitution of indole-isonitrile biosynthesis from cyanobacteria.</title>
        <authorList>
            <person name="Micallef M.L."/>
            <person name="Sharma D."/>
            <person name="Bunn B.M."/>
            <person name="Gerwick L."/>
            <person name="Viswanathan R."/>
            <person name="Moffitt M.C."/>
        </authorList>
    </citation>
    <scope>NUCLEOTIDE SEQUENCE [GENOMIC DNA]</scope>
    <source>
        <strain>UTEX 1903</strain>
    </source>
</reference>
<reference key="3">
    <citation type="journal article" date="2015" name="J. Am. Chem. Soc.">
        <title>Hapalindole/ambiguine biogenesis is mediated by a cope rearrangement, C-C bond-forming cascade.</title>
        <authorList>
            <person name="Li S."/>
            <person name="Lowell A.N."/>
            <person name="Yu F."/>
            <person name="Raveh A."/>
            <person name="Newmister S.A."/>
            <person name="Bair N."/>
            <person name="Schaub J.M."/>
            <person name="Williams R.M."/>
            <person name="Sherman D.H."/>
        </authorList>
    </citation>
    <scope>NUCLEOTIDE SEQUENCE [GENOMIC DNA]</scope>
    <source>
        <strain>UTEX 1903</strain>
    </source>
</reference>
<reference key="4">
    <citation type="journal article" date="2017" name="Org. Lett.">
        <title>In vitro stepwise reconstitution of amino acid derived vinyl isocyanide biosynthesis: detection of an elusive intermediate.</title>
        <authorList>
            <person name="Chang W.C."/>
            <person name="Sanyal D."/>
            <person name="Huang J.L."/>
            <person name="Ittiamornkul K."/>
            <person name="Zhu Q."/>
            <person name="Liu X."/>
        </authorList>
    </citation>
    <scope>FUNCTION</scope>
    <scope>CATALYTIC ACTIVITY</scope>
</reference>
<feature type="chain" id="PRO_0000453964" description="L-tryptophan isonitrile synthase AmbI1">
    <location>
        <begin position="1"/>
        <end position="319"/>
    </location>
</feature>
<accession>V5TF65</accession>
<keyword id="KW-0456">Lyase</keyword>
<dbReference type="EC" id="4.1.99.25" evidence="1 2"/>
<dbReference type="EMBL" id="KF664586">
    <property type="protein sequence ID" value="AHB62771.1"/>
    <property type="molecule type" value="Genomic_DNA"/>
</dbReference>
<dbReference type="EMBL" id="KJ742065">
    <property type="protein sequence ID" value="AIJ28556.1"/>
    <property type="molecule type" value="Genomic_DNA"/>
</dbReference>
<dbReference type="EMBL" id="KX451322">
    <property type="protein sequence ID" value="APB62257.1"/>
    <property type="molecule type" value="Genomic_DNA"/>
</dbReference>
<dbReference type="SMR" id="V5TF65"/>
<dbReference type="KEGG" id="ag:AHB62771"/>
<dbReference type="BioCyc" id="MetaCyc:MONOMER-20401"/>
<dbReference type="BRENDA" id="4.1.99.25">
    <property type="organism ID" value="15535"/>
</dbReference>
<dbReference type="GO" id="GO:0016829">
    <property type="term" value="F:lyase activity"/>
    <property type="evidence" value="ECO:0007669"/>
    <property type="project" value="UniProtKB-KW"/>
</dbReference>
<dbReference type="Gene3D" id="3.30.60.140">
    <property type="match status" value="1"/>
</dbReference>
<dbReference type="InterPro" id="IPR007817">
    <property type="entry name" value="Isocyanide_synthase_DIT1"/>
</dbReference>
<dbReference type="InterPro" id="IPR017133">
    <property type="entry name" value="PvcA"/>
</dbReference>
<dbReference type="PANTHER" id="PTHR37285">
    <property type="entry name" value="SPORE WALL MATURATION PROTEIN DIT1"/>
    <property type="match status" value="1"/>
</dbReference>
<dbReference type="PANTHER" id="PTHR37285:SF5">
    <property type="entry name" value="SPORE WALL MATURATION PROTEIN DIT1"/>
    <property type="match status" value="1"/>
</dbReference>
<dbReference type="Pfam" id="PF05141">
    <property type="entry name" value="DIT1_PvcA"/>
    <property type="match status" value="1"/>
</dbReference>
<dbReference type="PIRSF" id="PIRSF037196">
    <property type="entry name" value="Pyoverdine_chromoph_PvcA"/>
    <property type="match status" value="1"/>
</dbReference>
<comment type="function">
    <text evidence="1 2">Involved in the biosynthesis of ambiguines, a family of hapalindole-type alkaloids (PubMed:24180436). Responsible for the synthesis of the isonitrile group on tryptophan using ribulose 5-phosphate as the source of the carbon atom (PubMed:24180436, PubMed:28212039).</text>
</comment>
<comment type="catalytic activity">
    <reaction evidence="1 2">
        <text>D-ribulose 5-phosphate + L-tryptophan = (2S)-3-(1H-indol-3-yl)-2-isocyanopropanoate + hydroxyacetone + formaldehyde + phosphate + H2O + H(+)</text>
        <dbReference type="Rhea" id="RHEA:56696"/>
        <dbReference type="ChEBI" id="CHEBI:15377"/>
        <dbReference type="ChEBI" id="CHEBI:15378"/>
        <dbReference type="ChEBI" id="CHEBI:16842"/>
        <dbReference type="ChEBI" id="CHEBI:27957"/>
        <dbReference type="ChEBI" id="CHEBI:43474"/>
        <dbReference type="ChEBI" id="CHEBI:57912"/>
        <dbReference type="ChEBI" id="CHEBI:58121"/>
        <dbReference type="ChEBI" id="CHEBI:140652"/>
        <dbReference type="EC" id="4.1.99.25"/>
    </reaction>
    <physiologicalReaction direction="left-to-right" evidence="1 2">
        <dbReference type="Rhea" id="RHEA:56697"/>
    </physiologicalReaction>
</comment>
<comment type="similarity">
    <text evidence="5">Belongs to the isocyanide synthase family.</text>
</comment>
<sequence>MISEKILRHIFQYRRLLSDTEPCAKEPCSICLAPHLPKIQSFIENNEPIHFILPAFPAKSPNPQKVLGPMPDMGERVALQFLQNLCNQISEIYASGAKITICSDGRVFTDLVAITDENVSLYRQGIQRLLNEINADAIDTFCLENVFTGMSFDQMRKTLVKQYAQPIESIQERVNSEDKHRQFFKGIYHLLFDDYLVLYPDKSREQIEVECNLRAYEVIQRSNAWTTLVGQHFPQSLRLSIHPQDYHSNKIGIHMIKTSDQWGTPWHNAPMFNGKEFLLMKRKHIEDIGASLVWHNDHPSHYILSEQVSQALVTLDNKS</sequence>
<evidence type="ECO:0000269" key="1">
    <source>
    </source>
</evidence>
<evidence type="ECO:0000269" key="2">
    <source>
    </source>
</evidence>
<evidence type="ECO:0000303" key="3">
    <source>
    </source>
</evidence>
<evidence type="ECO:0000303" key="4">
    <source>
    </source>
</evidence>
<evidence type="ECO:0000305" key="5"/>